<comment type="function">
    <text evidence="1">Catalyzes the conversion of L-lactate to pyruvate. Is coupled to the respiratory chain.</text>
</comment>
<comment type="catalytic activity">
    <reaction evidence="1">
        <text>(S)-lactate + A = pyruvate + AH2</text>
        <dbReference type="Rhea" id="RHEA:45816"/>
        <dbReference type="ChEBI" id="CHEBI:13193"/>
        <dbReference type="ChEBI" id="CHEBI:15361"/>
        <dbReference type="ChEBI" id="CHEBI:16651"/>
        <dbReference type="ChEBI" id="CHEBI:17499"/>
    </reaction>
</comment>
<comment type="cofactor">
    <cofactor evidence="1">
        <name>FMN</name>
        <dbReference type="ChEBI" id="CHEBI:58210"/>
    </cofactor>
</comment>
<comment type="subunit">
    <text evidence="1">Homotetramer.</text>
</comment>
<comment type="subcellular location">
    <subcellularLocation>
        <location evidence="1">Cell inner membrane</location>
        <topology evidence="1">Peripheral membrane protein</topology>
    </subcellularLocation>
</comment>
<comment type="similarity">
    <text evidence="1">Belongs to the FMN-dependent alpha-hydroxy acid dehydrogenase family.</text>
</comment>
<keyword id="KW-0997">Cell inner membrane</keyword>
<keyword id="KW-1003">Cell membrane</keyword>
<keyword id="KW-0285">Flavoprotein</keyword>
<keyword id="KW-0288">FMN</keyword>
<keyword id="KW-0472">Membrane</keyword>
<keyword id="KW-0560">Oxidoreductase</keyword>
<keyword id="KW-1185">Reference proteome</keyword>
<accession>Q88DT3</accession>
<organism>
    <name type="scientific">Pseudomonas putida (strain ATCC 47054 / DSM 6125 / CFBP 8728 / NCIMB 11950 / KT2440)</name>
    <dbReference type="NCBI Taxonomy" id="160488"/>
    <lineage>
        <taxon>Bacteria</taxon>
        <taxon>Pseudomonadati</taxon>
        <taxon>Pseudomonadota</taxon>
        <taxon>Gammaproteobacteria</taxon>
        <taxon>Pseudomonadales</taxon>
        <taxon>Pseudomonadaceae</taxon>
        <taxon>Pseudomonas</taxon>
    </lineage>
</organism>
<feature type="chain" id="PRO_0000206342" description="L-lactate dehydrogenase">
    <location>
        <begin position="1"/>
        <end position="381"/>
    </location>
</feature>
<feature type="domain" description="FMN hydroxy acid dehydrogenase" evidence="1">
    <location>
        <begin position="1"/>
        <end position="380"/>
    </location>
</feature>
<feature type="active site" description="Proton acceptor" evidence="1">
    <location>
        <position position="275"/>
    </location>
</feature>
<feature type="binding site" evidence="1">
    <location>
        <position position="24"/>
    </location>
    <ligand>
        <name>substrate</name>
    </ligand>
</feature>
<feature type="binding site" evidence="1">
    <location>
        <position position="106"/>
    </location>
    <ligand>
        <name>FMN</name>
        <dbReference type="ChEBI" id="CHEBI:58210"/>
    </ligand>
</feature>
<feature type="binding site" evidence="1">
    <location>
        <position position="127"/>
    </location>
    <ligand>
        <name>FMN</name>
        <dbReference type="ChEBI" id="CHEBI:58210"/>
    </ligand>
</feature>
<feature type="binding site" evidence="1">
    <location>
        <position position="129"/>
    </location>
    <ligand>
        <name>substrate</name>
    </ligand>
</feature>
<feature type="binding site" evidence="1">
    <location>
        <position position="155"/>
    </location>
    <ligand>
        <name>FMN</name>
        <dbReference type="ChEBI" id="CHEBI:58210"/>
    </ligand>
</feature>
<feature type="binding site" evidence="1">
    <location>
        <position position="164"/>
    </location>
    <ligand>
        <name>substrate</name>
    </ligand>
</feature>
<feature type="binding site" evidence="1">
    <location>
        <position position="251"/>
    </location>
    <ligand>
        <name>FMN</name>
        <dbReference type="ChEBI" id="CHEBI:58210"/>
    </ligand>
</feature>
<feature type="binding site" evidence="1">
    <location>
        <position position="278"/>
    </location>
    <ligand>
        <name>substrate</name>
    </ligand>
</feature>
<feature type="binding site" evidence="1">
    <location>
        <begin position="306"/>
        <end position="330"/>
    </location>
    <ligand>
        <name>FMN</name>
        <dbReference type="ChEBI" id="CHEBI:58210"/>
    </ligand>
</feature>
<protein>
    <recommendedName>
        <fullName evidence="1">L-lactate dehydrogenase</fullName>
        <ecNumber evidence="1">1.1.-.-</ecNumber>
    </recommendedName>
</protein>
<gene>
    <name evidence="1" type="primary">lldD</name>
    <name type="ordered locus">PP_4736</name>
</gene>
<name>LLDD_PSEPK</name>
<reference key="1">
    <citation type="journal article" date="2002" name="Environ. Microbiol.">
        <title>Complete genome sequence and comparative analysis of the metabolically versatile Pseudomonas putida KT2440.</title>
        <authorList>
            <person name="Nelson K.E."/>
            <person name="Weinel C."/>
            <person name="Paulsen I.T."/>
            <person name="Dodson R.J."/>
            <person name="Hilbert H."/>
            <person name="Martins dos Santos V.A.P."/>
            <person name="Fouts D.E."/>
            <person name="Gill S.R."/>
            <person name="Pop M."/>
            <person name="Holmes M."/>
            <person name="Brinkac L.M."/>
            <person name="Beanan M.J."/>
            <person name="DeBoy R.T."/>
            <person name="Daugherty S.C."/>
            <person name="Kolonay J.F."/>
            <person name="Madupu R."/>
            <person name="Nelson W.C."/>
            <person name="White O."/>
            <person name="Peterson J.D."/>
            <person name="Khouri H.M."/>
            <person name="Hance I."/>
            <person name="Chris Lee P."/>
            <person name="Holtzapple E.K."/>
            <person name="Scanlan D."/>
            <person name="Tran K."/>
            <person name="Moazzez A."/>
            <person name="Utterback T.R."/>
            <person name="Rizzo M."/>
            <person name="Lee K."/>
            <person name="Kosack D."/>
            <person name="Moestl D."/>
            <person name="Wedler H."/>
            <person name="Lauber J."/>
            <person name="Stjepandic D."/>
            <person name="Hoheisel J."/>
            <person name="Straetz M."/>
            <person name="Heim S."/>
            <person name="Kiewitz C."/>
            <person name="Eisen J.A."/>
            <person name="Timmis K.N."/>
            <person name="Duesterhoeft A."/>
            <person name="Tuemmler B."/>
            <person name="Fraser C.M."/>
        </authorList>
    </citation>
    <scope>NUCLEOTIDE SEQUENCE [LARGE SCALE GENOMIC DNA]</scope>
    <source>
        <strain>ATCC 47054 / DSM 6125 / CFBP 8728 / NCIMB 11950 / KT2440</strain>
    </source>
</reference>
<dbReference type="EC" id="1.1.-.-" evidence="1"/>
<dbReference type="EMBL" id="AE015451">
    <property type="protein sequence ID" value="AAN70308.1"/>
    <property type="molecule type" value="Genomic_DNA"/>
</dbReference>
<dbReference type="RefSeq" id="NP_746844.1">
    <property type="nucleotide sequence ID" value="NC_002947.4"/>
</dbReference>
<dbReference type="RefSeq" id="WP_003249907.1">
    <property type="nucleotide sequence ID" value="NZ_CP169744.1"/>
</dbReference>
<dbReference type="SMR" id="Q88DT3"/>
<dbReference type="STRING" id="160488.PP_4736"/>
<dbReference type="PaxDb" id="160488-PP_4736"/>
<dbReference type="GeneID" id="83682453"/>
<dbReference type="KEGG" id="ppu:PP_4736"/>
<dbReference type="PATRIC" id="fig|160488.4.peg.5048"/>
<dbReference type="eggNOG" id="COG1304">
    <property type="taxonomic scope" value="Bacteria"/>
</dbReference>
<dbReference type="HOGENOM" id="CLU_020639_0_0_6"/>
<dbReference type="OrthoDB" id="9770452at2"/>
<dbReference type="PhylomeDB" id="Q88DT3"/>
<dbReference type="BioCyc" id="PPUT160488:G1G01-5064-MONOMER"/>
<dbReference type="Proteomes" id="UP000000556">
    <property type="component" value="Chromosome"/>
</dbReference>
<dbReference type="GO" id="GO:0005886">
    <property type="term" value="C:plasma membrane"/>
    <property type="evidence" value="ECO:0007669"/>
    <property type="project" value="UniProtKB-SubCell"/>
</dbReference>
<dbReference type="GO" id="GO:0010181">
    <property type="term" value="F:FMN binding"/>
    <property type="evidence" value="ECO:0007669"/>
    <property type="project" value="InterPro"/>
</dbReference>
<dbReference type="GO" id="GO:0004459">
    <property type="term" value="F:L-lactate dehydrogenase activity"/>
    <property type="evidence" value="ECO:0007669"/>
    <property type="project" value="UniProtKB-UniRule"/>
</dbReference>
<dbReference type="GO" id="GO:0009060">
    <property type="term" value="P:aerobic respiration"/>
    <property type="evidence" value="ECO:0007669"/>
    <property type="project" value="TreeGrafter"/>
</dbReference>
<dbReference type="GO" id="GO:0006089">
    <property type="term" value="P:lactate metabolic process"/>
    <property type="evidence" value="ECO:0007669"/>
    <property type="project" value="UniProtKB-UniRule"/>
</dbReference>
<dbReference type="CDD" id="cd02809">
    <property type="entry name" value="alpha_hydroxyacid_oxid_FMN"/>
    <property type="match status" value="1"/>
</dbReference>
<dbReference type="FunFam" id="3.20.20.70:FF:000029">
    <property type="entry name" value="L-lactate dehydrogenase"/>
    <property type="match status" value="1"/>
</dbReference>
<dbReference type="Gene3D" id="3.20.20.70">
    <property type="entry name" value="Aldolase class I"/>
    <property type="match status" value="1"/>
</dbReference>
<dbReference type="HAMAP" id="MF_01559">
    <property type="entry name" value="L_lact_dehydr"/>
    <property type="match status" value="1"/>
</dbReference>
<dbReference type="InterPro" id="IPR013785">
    <property type="entry name" value="Aldolase_TIM"/>
</dbReference>
<dbReference type="InterPro" id="IPR012133">
    <property type="entry name" value="Alpha-hydoxy_acid_DH_FMN"/>
</dbReference>
<dbReference type="InterPro" id="IPR000262">
    <property type="entry name" value="FMN-dep_DH"/>
</dbReference>
<dbReference type="InterPro" id="IPR037396">
    <property type="entry name" value="FMN_HAD"/>
</dbReference>
<dbReference type="InterPro" id="IPR008259">
    <property type="entry name" value="FMN_hydac_DH_AS"/>
</dbReference>
<dbReference type="InterPro" id="IPR020920">
    <property type="entry name" value="LldD"/>
</dbReference>
<dbReference type="NCBIfam" id="NF033901">
    <property type="entry name" value="L_lactate_LldD"/>
    <property type="match status" value="1"/>
</dbReference>
<dbReference type="NCBIfam" id="NF008398">
    <property type="entry name" value="PRK11197.1"/>
    <property type="match status" value="1"/>
</dbReference>
<dbReference type="PANTHER" id="PTHR10578:SF85">
    <property type="entry name" value="L-LACTATE DEHYDROGENASE"/>
    <property type="match status" value="1"/>
</dbReference>
<dbReference type="PANTHER" id="PTHR10578">
    <property type="entry name" value="S -2-HYDROXY-ACID OXIDASE-RELATED"/>
    <property type="match status" value="1"/>
</dbReference>
<dbReference type="Pfam" id="PF01070">
    <property type="entry name" value="FMN_dh"/>
    <property type="match status" value="1"/>
</dbReference>
<dbReference type="PIRSF" id="PIRSF000138">
    <property type="entry name" value="Al-hdrx_acd_dh"/>
    <property type="match status" value="1"/>
</dbReference>
<dbReference type="SUPFAM" id="SSF51395">
    <property type="entry name" value="FMN-linked oxidoreductases"/>
    <property type="match status" value="1"/>
</dbReference>
<dbReference type="PROSITE" id="PS00557">
    <property type="entry name" value="FMN_HYDROXY_ACID_DH_1"/>
    <property type="match status" value="1"/>
</dbReference>
<dbReference type="PROSITE" id="PS51349">
    <property type="entry name" value="FMN_HYDROXY_ACID_DH_2"/>
    <property type="match status" value="1"/>
</dbReference>
<evidence type="ECO:0000255" key="1">
    <source>
        <dbReference type="HAMAP-Rule" id="MF_01559"/>
    </source>
</evidence>
<proteinExistence type="inferred from homology"/>
<sequence length="381" mass="41392">MIISASTDYRAAAQRKLPPFLFHYADGGAYAEHTLRHNVSDLAGIALRQRVLNNMSELSLETKLFDETLSMPVALAPVGLTGMYARRGEVQAARAAAAHGIPFTMSTVSVCPIEEVAPAINRPMWFQLYVLKDRGFMRNALERAKAAGVKTLVFTVDMPVPGARYRDAHSGMSGKNGPLRRVLQAMTHPEWAWDVGVMGRPHDLGNISKYRGNPTGLADYIGWLGNNFDPSISWKDLEWIREFWDGPMIIKGILDADDARDAVKFGADGIVVSNHGGRQLDGVLSSARALPAIADAVKGDLKILADSGIRSGLDVVRMIALGADTVLIGRAFLYALAVHGQAGVKNLLELFEKEMRVAMVLTGAKSISEITRDSLVRELGA</sequence>